<dbReference type="EC" id="3.6.5.-" evidence="1 3"/>
<dbReference type="EMBL" id="CR848038">
    <property type="protein sequence ID" value="CAH63652.1"/>
    <property type="molecule type" value="Genomic_DNA"/>
</dbReference>
<dbReference type="RefSeq" id="WP_011096890.1">
    <property type="nucleotide sequence ID" value="NC_004552.2"/>
</dbReference>
<dbReference type="SMR" id="Q5L6R9"/>
<dbReference type="GeneID" id="93024752"/>
<dbReference type="KEGG" id="cab:CAB194"/>
<dbReference type="eggNOG" id="COG0536">
    <property type="taxonomic scope" value="Bacteria"/>
</dbReference>
<dbReference type="HOGENOM" id="CLU_011747_2_3_0"/>
<dbReference type="OrthoDB" id="9807318at2"/>
<dbReference type="Proteomes" id="UP000001012">
    <property type="component" value="Chromosome"/>
</dbReference>
<dbReference type="GO" id="GO:0005737">
    <property type="term" value="C:cytoplasm"/>
    <property type="evidence" value="ECO:0000314"/>
    <property type="project" value="UniProtKB"/>
</dbReference>
<dbReference type="GO" id="GO:0005525">
    <property type="term" value="F:GTP binding"/>
    <property type="evidence" value="ECO:0007669"/>
    <property type="project" value="UniProtKB-UniRule"/>
</dbReference>
<dbReference type="GO" id="GO:0003924">
    <property type="term" value="F:GTPase activity"/>
    <property type="evidence" value="ECO:0000314"/>
    <property type="project" value="UniProtKB"/>
</dbReference>
<dbReference type="GO" id="GO:0000287">
    <property type="term" value="F:magnesium ion binding"/>
    <property type="evidence" value="ECO:0007669"/>
    <property type="project" value="InterPro"/>
</dbReference>
<dbReference type="GO" id="GO:0043022">
    <property type="term" value="F:ribosome binding"/>
    <property type="evidence" value="ECO:0000314"/>
    <property type="project" value="UniProtKB"/>
</dbReference>
<dbReference type="GO" id="GO:0042254">
    <property type="term" value="P:ribosome biogenesis"/>
    <property type="evidence" value="ECO:0007669"/>
    <property type="project" value="UniProtKB-UniRule"/>
</dbReference>
<dbReference type="CDD" id="cd01898">
    <property type="entry name" value="Obg"/>
    <property type="match status" value="1"/>
</dbReference>
<dbReference type="FunFam" id="2.70.210.12:FF:000001">
    <property type="entry name" value="GTPase Obg"/>
    <property type="match status" value="1"/>
</dbReference>
<dbReference type="Gene3D" id="2.70.210.12">
    <property type="entry name" value="GTP1/OBG domain"/>
    <property type="match status" value="1"/>
</dbReference>
<dbReference type="Gene3D" id="3.40.50.300">
    <property type="entry name" value="P-loop containing nucleotide triphosphate hydrolases"/>
    <property type="match status" value="1"/>
</dbReference>
<dbReference type="HAMAP" id="MF_01454">
    <property type="entry name" value="GTPase_Obg"/>
    <property type="match status" value="1"/>
</dbReference>
<dbReference type="InterPro" id="IPR031167">
    <property type="entry name" value="G_OBG"/>
</dbReference>
<dbReference type="InterPro" id="IPR006073">
    <property type="entry name" value="GTP-bd"/>
</dbReference>
<dbReference type="InterPro" id="IPR014100">
    <property type="entry name" value="GTP-bd_Obg/CgtA"/>
</dbReference>
<dbReference type="InterPro" id="IPR006169">
    <property type="entry name" value="GTP1_OBG_dom"/>
</dbReference>
<dbReference type="InterPro" id="IPR036726">
    <property type="entry name" value="GTP1_OBG_dom_sf"/>
</dbReference>
<dbReference type="InterPro" id="IPR045086">
    <property type="entry name" value="OBG_GTPase"/>
</dbReference>
<dbReference type="InterPro" id="IPR027417">
    <property type="entry name" value="P-loop_NTPase"/>
</dbReference>
<dbReference type="NCBIfam" id="TIGR02729">
    <property type="entry name" value="Obg_CgtA"/>
    <property type="match status" value="1"/>
</dbReference>
<dbReference type="NCBIfam" id="NF008955">
    <property type="entry name" value="PRK12297.1"/>
    <property type="match status" value="1"/>
</dbReference>
<dbReference type="NCBIfam" id="NF008956">
    <property type="entry name" value="PRK12299.1"/>
    <property type="match status" value="1"/>
</dbReference>
<dbReference type="PANTHER" id="PTHR11702">
    <property type="entry name" value="DEVELOPMENTALLY REGULATED GTP-BINDING PROTEIN-RELATED"/>
    <property type="match status" value="1"/>
</dbReference>
<dbReference type="PANTHER" id="PTHR11702:SF31">
    <property type="entry name" value="MITOCHONDRIAL RIBOSOME-ASSOCIATED GTPASE 2"/>
    <property type="match status" value="1"/>
</dbReference>
<dbReference type="Pfam" id="PF01018">
    <property type="entry name" value="GTP1_OBG"/>
    <property type="match status" value="1"/>
</dbReference>
<dbReference type="Pfam" id="PF01926">
    <property type="entry name" value="MMR_HSR1"/>
    <property type="match status" value="1"/>
</dbReference>
<dbReference type="PIRSF" id="PIRSF002401">
    <property type="entry name" value="GTP_bd_Obg/CgtA"/>
    <property type="match status" value="1"/>
</dbReference>
<dbReference type="PRINTS" id="PR00326">
    <property type="entry name" value="GTP1OBG"/>
</dbReference>
<dbReference type="SUPFAM" id="SSF82051">
    <property type="entry name" value="Obg GTP-binding protein N-terminal domain"/>
    <property type="match status" value="1"/>
</dbReference>
<dbReference type="SUPFAM" id="SSF52540">
    <property type="entry name" value="P-loop containing nucleoside triphosphate hydrolases"/>
    <property type="match status" value="1"/>
</dbReference>
<dbReference type="PROSITE" id="PS51710">
    <property type="entry name" value="G_OBG"/>
    <property type="match status" value="1"/>
</dbReference>
<dbReference type="PROSITE" id="PS51883">
    <property type="entry name" value="OBG"/>
    <property type="match status" value="1"/>
</dbReference>
<evidence type="ECO:0000255" key="1">
    <source>
        <dbReference type="HAMAP-Rule" id="MF_01454"/>
    </source>
</evidence>
<evidence type="ECO:0000255" key="2">
    <source>
        <dbReference type="PROSITE-ProRule" id="PRU01231"/>
    </source>
</evidence>
<evidence type="ECO:0000269" key="3">
    <source>
    </source>
</evidence>
<evidence type="ECO:0000303" key="4">
    <source>
    </source>
</evidence>
<evidence type="ECO:0000305" key="5">
    <source>
    </source>
</evidence>
<organism>
    <name type="scientific">Chlamydia abortus (strain DSM 27085 / S26/3)</name>
    <name type="common">Chlamydophila abortus</name>
    <dbReference type="NCBI Taxonomy" id="218497"/>
    <lineage>
        <taxon>Bacteria</taxon>
        <taxon>Pseudomonadati</taxon>
        <taxon>Chlamydiota</taxon>
        <taxon>Chlamydiia</taxon>
        <taxon>Chlamydiales</taxon>
        <taxon>Chlamydiaceae</taxon>
        <taxon>Chlamydia/Chlamydophila group</taxon>
        <taxon>Chlamydia</taxon>
    </lineage>
</organism>
<keyword id="KW-0963">Cytoplasm</keyword>
<keyword id="KW-0342">GTP-binding</keyword>
<keyword id="KW-0378">Hydrolase</keyword>
<keyword id="KW-0460">Magnesium</keyword>
<keyword id="KW-0479">Metal-binding</keyword>
<keyword id="KW-0547">Nucleotide-binding</keyword>
<sequence>MFLDQITIELRAGKGGNGVVAWRKEKYLPKGGPYGGNGGVGGSIIIESATHVYSFESYRNIRFLKAEDGRPGATNNRSGKNGKDLVLIVPEGTLLRDVETKEILYDFAKSGERLVVCRGGKGGKGNTFFKTSTNRAPTKATPGKPGEIRQVELELKLIADIGLVGFPNAGKSTLFNTLARTEVKVGAYPFTTLQPVLGLVPCQEKLYQKPWIIADIPGIIEGAHQNRGLGLDFLRHIERTRLLLFVIDICGCERSSPEEDLRILMDELVHYREDLADKNRIIALNKIDDLLPDERQERLESFQKLFPSETFVLVSGLTGEGVDLLNSLFTNKLAV</sequence>
<feature type="chain" id="PRO_0000385819" description="GTPase Obg">
    <location>
        <begin position="1"/>
        <end position="335"/>
    </location>
</feature>
<feature type="domain" description="Obg" evidence="2">
    <location>
        <begin position="1"/>
        <end position="158"/>
    </location>
</feature>
<feature type="domain" description="OBG-type G" evidence="1">
    <location>
        <begin position="159"/>
        <end position="334"/>
    </location>
</feature>
<feature type="binding site" evidence="1">
    <location>
        <begin position="165"/>
        <end position="172"/>
    </location>
    <ligand>
        <name>GTP</name>
        <dbReference type="ChEBI" id="CHEBI:37565"/>
    </ligand>
</feature>
<feature type="binding site" evidence="1">
    <location>
        <position position="172"/>
    </location>
    <ligand>
        <name>Mg(2+)</name>
        <dbReference type="ChEBI" id="CHEBI:18420"/>
    </ligand>
</feature>
<feature type="binding site" evidence="1">
    <location>
        <begin position="190"/>
        <end position="194"/>
    </location>
    <ligand>
        <name>GTP</name>
        <dbReference type="ChEBI" id="CHEBI:37565"/>
    </ligand>
</feature>
<feature type="binding site" evidence="1">
    <location>
        <position position="192"/>
    </location>
    <ligand>
        <name>Mg(2+)</name>
        <dbReference type="ChEBI" id="CHEBI:18420"/>
    </ligand>
</feature>
<feature type="binding site" evidence="1">
    <location>
        <begin position="215"/>
        <end position="218"/>
    </location>
    <ligand>
        <name>GTP</name>
        <dbReference type="ChEBI" id="CHEBI:37565"/>
    </ligand>
</feature>
<feature type="binding site" evidence="1">
    <location>
        <begin position="285"/>
        <end position="288"/>
    </location>
    <ligand>
        <name>GTP</name>
        <dbReference type="ChEBI" id="CHEBI:37565"/>
    </ligand>
</feature>
<feature type="binding site" evidence="1">
    <location>
        <begin position="315"/>
        <end position="317"/>
    </location>
    <ligand>
        <name>GTP</name>
        <dbReference type="ChEBI" id="CHEBI:37565"/>
    </ligand>
</feature>
<gene>
    <name evidence="1" type="primary">obg</name>
    <name evidence="4" type="synonym">yhbZ</name>
    <name type="ordered locus">CAB194</name>
</gene>
<comment type="function">
    <text evidence="1 3">An essential GTPase (4.1 pmol GTP/min) (PubMed:21195156). Cannot substitute endogenous obg in E.coli, has a partially dominant-negative phenotype upon overexpression in liquid culture leading to decreased growth rate in a concentration-dependent fashion, with 50% of cells being elongated (PubMed:21195156). Binds GTP, GDP and possibly (p)ppGpp with moderate affinity, with high nucleotide exchange rates and a fairly low GTP hydrolysis rate. It may play a role in control of the cell cycle, stress response, ribosome biogenesis and in those bacteria that undergo differentiation, in morphogenesis control (By similarity).</text>
</comment>
<comment type="cofactor">
    <cofactor evidence="1">
        <name>Mg(2+)</name>
        <dbReference type="ChEBI" id="CHEBI:18420"/>
    </cofactor>
</comment>
<comment type="subunit">
    <text evidence="1">Monomer.</text>
</comment>
<comment type="subcellular location">
    <subcellularLocation>
        <location evidence="1 5">Cytoplasm</location>
    </subcellularLocation>
    <text evidence="3">Associates with 50S ribosomal subunit upon overexpression in E.coli.</text>
</comment>
<comment type="similarity">
    <text evidence="1">Belongs to the TRAFAC class OBG-HflX-like GTPase superfamily. OBG GTPase family.</text>
</comment>
<name>OBG_CHLAB</name>
<protein>
    <recommendedName>
        <fullName evidence="1">GTPase Obg</fullName>
        <ecNumber evidence="1 3">3.6.5.-</ecNumber>
    </recommendedName>
    <alternativeName>
        <fullName evidence="1">GTP-binding protein Obg</fullName>
    </alternativeName>
</protein>
<proteinExistence type="inferred from homology"/>
<reference key="1">
    <citation type="journal article" date="2005" name="Genome Res.">
        <title>The Chlamydophila abortus genome sequence reveals an array of variable proteins that contribute to interspecies variation.</title>
        <authorList>
            <person name="Thomson N.R."/>
            <person name="Yeats C."/>
            <person name="Bell K."/>
            <person name="Holden M.T.G."/>
            <person name="Bentley S.D."/>
            <person name="Livingstone M."/>
            <person name="Cerdeno-Tarraga A.-M."/>
            <person name="Harris B."/>
            <person name="Doggett J."/>
            <person name="Ormond D."/>
            <person name="Mungall K."/>
            <person name="Clarke K."/>
            <person name="Feltwell T."/>
            <person name="Hance Z."/>
            <person name="Sanders M."/>
            <person name="Quail M.A."/>
            <person name="Price C."/>
            <person name="Barrell B.G."/>
            <person name="Parkhill J."/>
            <person name="Longbottom D."/>
        </authorList>
    </citation>
    <scope>NUCLEOTIDE SEQUENCE [LARGE SCALE GENOMIC DNA]</scope>
    <source>
        <strain>DSM 27085 / S26/3</strain>
    </source>
</reference>
<reference key="2">
    <citation type="journal article" date="2011" name="Microb. Pathog.">
        <title>Chlamydia abortus YhbZ, a truncated Obg family GTPase, associates with the Escherichia coli large ribosomal subunit.</title>
        <authorList>
            <person name="Polkinghorne A."/>
            <person name="Vaughan L."/>
        </authorList>
    </citation>
    <scope>FUNCTION</scope>
    <scope>SUBCELLULAR LOCATION</scope>
    <scope>EXPRESSION IN E.COLI</scope>
    <source>
        <strain>DSM 27085 / S26/3</strain>
    </source>
</reference>
<accession>Q5L6R9</accession>